<dbReference type="EMBL" id="CP000076">
    <property type="protein sequence ID" value="AAY94839.2"/>
    <property type="molecule type" value="Genomic_DNA"/>
</dbReference>
<dbReference type="RefSeq" id="WP_011063824.1">
    <property type="nucleotide sequence ID" value="NC_004129.6"/>
</dbReference>
<dbReference type="SMR" id="Q4K4X8"/>
<dbReference type="STRING" id="220664.PFL_5646"/>
<dbReference type="KEGG" id="pfl:PFL_5646"/>
<dbReference type="PATRIC" id="fig|220664.5.peg.5758"/>
<dbReference type="eggNOG" id="COG1452">
    <property type="taxonomic scope" value="Bacteria"/>
</dbReference>
<dbReference type="HOGENOM" id="CLU_009039_1_0_6"/>
<dbReference type="Proteomes" id="UP000008540">
    <property type="component" value="Chromosome"/>
</dbReference>
<dbReference type="GO" id="GO:0009279">
    <property type="term" value="C:cell outer membrane"/>
    <property type="evidence" value="ECO:0007669"/>
    <property type="project" value="UniProtKB-SubCell"/>
</dbReference>
<dbReference type="GO" id="GO:1990351">
    <property type="term" value="C:transporter complex"/>
    <property type="evidence" value="ECO:0007669"/>
    <property type="project" value="TreeGrafter"/>
</dbReference>
<dbReference type="GO" id="GO:0043165">
    <property type="term" value="P:Gram-negative-bacterium-type cell outer membrane assembly"/>
    <property type="evidence" value="ECO:0007669"/>
    <property type="project" value="UniProtKB-UniRule"/>
</dbReference>
<dbReference type="GO" id="GO:0015920">
    <property type="term" value="P:lipopolysaccharide transport"/>
    <property type="evidence" value="ECO:0007669"/>
    <property type="project" value="InterPro"/>
</dbReference>
<dbReference type="Gene3D" id="2.60.450.10">
    <property type="entry name" value="Lipopolysaccharide (LPS) transport protein A like domain"/>
    <property type="match status" value="1"/>
</dbReference>
<dbReference type="HAMAP" id="MF_01411">
    <property type="entry name" value="LPS_assembly_LptD"/>
    <property type="match status" value="1"/>
</dbReference>
<dbReference type="InterPro" id="IPR020889">
    <property type="entry name" value="LipoPS_assembly_LptD"/>
</dbReference>
<dbReference type="InterPro" id="IPR050218">
    <property type="entry name" value="LptD"/>
</dbReference>
<dbReference type="InterPro" id="IPR007543">
    <property type="entry name" value="LptD_C"/>
</dbReference>
<dbReference type="InterPro" id="IPR005653">
    <property type="entry name" value="OstA-like_N"/>
</dbReference>
<dbReference type="PANTHER" id="PTHR30189">
    <property type="entry name" value="LPS-ASSEMBLY PROTEIN"/>
    <property type="match status" value="1"/>
</dbReference>
<dbReference type="PANTHER" id="PTHR30189:SF1">
    <property type="entry name" value="LPS-ASSEMBLY PROTEIN LPTD"/>
    <property type="match status" value="1"/>
</dbReference>
<dbReference type="Pfam" id="PF04453">
    <property type="entry name" value="LptD"/>
    <property type="match status" value="1"/>
</dbReference>
<dbReference type="Pfam" id="PF03968">
    <property type="entry name" value="LptD_N"/>
    <property type="match status" value="1"/>
</dbReference>
<protein>
    <recommendedName>
        <fullName evidence="1">LPS-assembly protein LptD</fullName>
    </recommendedName>
</protein>
<evidence type="ECO:0000255" key="1">
    <source>
        <dbReference type="HAMAP-Rule" id="MF_01411"/>
    </source>
</evidence>
<evidence type="ECO:0000256" key="2">
    <source>
        <dbReference type="SAM" id="MobiDB-lite"/>
    </source>
</evidence>
<name>LPTD_PSEF5</name>
<gene>
    <name evidence="1" type="primary">lptD</name>
    <name type="synonym">imp</name>
    <name type="synonym">ostA</name>
    <name type="ordered locus">PFL_5646</name>
</gene>
<comment type="function">
    <text evidence="1">Together with LptE, is involved in the assembly of lipopolysaccharide (LPS) at the surface of the outer membrane.</text>
</comment>
<comment type="subunit">
    <text evidence="1">Component of the lipopolysaccharide transport and assembly complex. Interacts with LptE and LptA.</text>
</comment>
<comment type="subcellular location">
    <subcellularLocation>
        <location evidence="1">Cell outer membrane</location>
    </subcellularLocation>
</comment>
<comment type="similarity">
    <text evidence="1">Belongs to the LptD family.</text>
</comment>
<keyword id="KW-0998">Cell outer membrane</keyword>
<keyword id="KW-0472">Membrane</keyword>
<keyword id="KW-0732">Signal</keyword>
<reference key="1">
    <citation type="journal article" date="2005" name="Nat. Biotechnol.">
        <title>Complete genome sequence of the plant commensal Pseudomonas fluorescens Pf-5.</title>
        <authorList>
            <person name="Paulsen I.T."/>
            <person name="Press C.M."/>
            <person name="Ravel J."/>
            <person name="Kobayashi D.Y."/>
            <person name="Myers G.S.A."/>
            <person name="Mavrodi D.V."/>
            <person name="DeBoy R.T."/>
            <person name="Seshadri R."/>
            <person name="Ren Q."/>
            <person name="Madupu R."/>
            <person name="Dodson R.J."/>
            <person name="Durkin A.S."/>
            <person name="Brinkac L.M."/>
            <person name="Daugherty S.C."/>
            <person name="Sullivan S.A."/>
            <person name="Rosovitz M.J."/>
            <person name="Gwinn M.L."/>
            <person name="Zhou L."/>
            <person name="Schneider D.J."/>
            <person name="Cartinhour S.W."/>
            <person name="Nelson W.C."/>
            <person name="Weidman J."/>
            <person name="Watkins K."/>
            <person name="Tran K."/>
            <person name="Khouri H."/>
            <person name="Pierson E.A."/>
            <person name="Pierson L.S. III"/>
            <person name="Thomashow L.S."/>
            <person name="Loper J.E."/>
        </authorList>
    </citation>
    <scope>NUCLEOTIDE SEQUENCE [LARGE SCALE GENOMIC DNA]</scope>
    <source>
        <strain>ATCC BAA-477 / NRRL B-23932 / Pf-5</strain>
    </source>
</reference>
<accession>Q4K4X8</accession>
<proteinExistence type="inferred from homology"/>
<sequence length="945" mass="106300">MALKSPAFRKKFPLLVTGSLLALQPLATSFVVAAEQYDCSVSASGGWACAPKTSAAQLPPRPVHDANSVSSSVATAADATGEEASGDKSKLVTEAKGRGLKSRSADYSHLDWVPREKLTAAQLAETGPYCSGSYIEPIRPGMNDKTNKSDAPTFIGAKASRYQQEEQVATLAGDVVMRQGSMQVEADEASLYQAENRGELSGNVRVRDNGALLVGDHADIQLDTGEAKVDNAEYVLHKSRVRGNALYAKRAENAIIRLKDGTYTTCEPNSNAWQLKGNNITLNPATGFGTATNVTLRVKDIPVLYTPYIYFPIDDRRQSGFLPPSFSTGSDTGFMLVTPYYFNLAPNYDATLYPRYMAKRGLLMEGEFRYLTKSSEGQFGAAYLNDDDTDRKKQTDYEKTRYMLNWQHKGGLDSRLMTEVDYTKISDPYYFQDLQTDQIGVKATDYVNQQGVVTYRGDDYTARLNVQAYELASVANITPYNKLPQITFNGALPYHPQGLDFTYETELVRFDRDLLTGNYTDKDGGPIDPVTGAVGTRRLDTNVAGLARANGDRLNLKPGVSLPLNWSYGYLTPSLKYMYTQYNLDLDGTGKEGIVAARNYATATGTRYVGGDYSRNQNRGVPIASLDGGLYFDRNTQWFGKNYRQTLEPRAFYLYVPEEDQKDIPVFDTGEPTFNYASLFRDNRFSGSDRVGDENKLSLGVTSRWIEDNGFQRQRISVGQALYFKDRTVQLPGIDYRTRADATSNVSPYALEYEYRYNRDWRATADYNWDPDSHSARSGSAMFHYQPEDNPNKVVNAGYRYRNDQIRYDQNSGTWKMGGDYGTPGQPGYVKDYYKIQQHDFSVIWPIVPQWNAISRWQYDYNRNRTLEAFGGFEYDNCCWKLRLISRYWVKYDEFSQNAPENEKGDRGIFLQIVLKGLGGVMGTKVESFLDKGIQGYREREDQAF</sequence>
<organism>
    <name type="scientific">Pseudomonas fluorescens (strain ATCC BAA-477 / NRRL B-23932 / Pf-5)</name>
    <dbReference type="NCBI Taxonomy" id="220664"/>
    <lineage>
        <taxon>Bacteria</taxon>
        <taxon>Pseudomonadati</taxon>
        <taxon>Pseudomonadota</taxon>
        <taxon>Gammaproteobacteria</taxon>
        <taxon>Pseudomonadales</taxon>
        <taxon>Pseudomonadaceae</taxon>
        <taxon>Pseudomonas</taxon>
    </lineage>
</organism>
<feature type="signal peptide" evidence="1">
    <location>
        <begin position="1"/>
        <end position="33"/>
    </location>
</feature>
<feature type="chain" id="PRO_0000281626" description="LPS-assembly protein LptD">
    <location>
        <begin position="34"/>
        <end position="945"/>
    </location>
</feature>
<feature type="region of interest" description="Disordered" evidence="2">
    <location>
        <begin position="56"/>
        <end position="98"/>
    </location>
</feature>
<feature type="compositionally biased region" description="Low complexity" evidence="2">
    <location>
        <begin position="65"/>
        <end position="79"/>
    </location>
</feature>
<feature type="compositionally biased region" description="Basic and acidic residues" evidence="2">
    <location>
        <begin position="85"/>
        <end position="98"/>
    </location>
</feature>